<reference key="1">
    <citation type="journal article" date="2004" name="Nat. Genet.">
        <title>Complete sequencing and characterization of 21,243 full-length human cDNAs.</title>
        <authorList>
            <person name="Ota T."/>
            <person name="Suzuki Y."/>
            <person name="Nishikawa T."/>
            <person name="Otsuki T."/>
            <person name="Sugiyama T."/>
            <person name="Irie R."/>
            <person name="Wakamatsu A."/>
            <person name="Hayashi K."/>
            <person name="Sato H."/>
            <person name="Nagai K."/>
            <person name="Kimura K."/>
            <person name="Makita H."/>
            <person name="Sekine M."/>
            <person name="Obayashi M."/>
            <person name="Nishi T."/>
            <person name="Shibahara T."/>
            <person name="Tanaka T."/>
            <person name="Ishii S."/>
            <person name="Yamamoto J."/>
            <person name="Saito K."/>
            <person name="Kawai Y."/>
            <person name="Isono Y."/>
            <person name="Nakamura Y."/>
            <person name="Nagahari K."/>
            <person name="Murakami K."/>
            <person name="Yasuda T."/>
            <person name="Iwayanagi T."/>
            <person name="Wagatsuma M."/>
            <person name="Shiratori A."/>
            <person name="Sudo H."/>
            <person name="Hosoiri T."/>
            <person name="Kaku Y."/>
            <person name="Kodaira H."/>
            <person name="Kondo H."/>
            <person name="Sugawara M."/>
            <person name="Takahashi M."/>
            <person name="Kanda K."/>
            <person name="Yokoi T."/>
            <person name="Furuya T."/>
            <person name="Kikkawa E."/>
            <person name="Omura Y."/>
            <person name="Abe K."/>
            <person name="Kamihara K."/>
            <person name="Katsuta N."/>
            <person name="Sato K."/>
            <person name="Tanikawa M."/>
            <person name="Yamazaki M."/>
            <person name="Ninomiya K."/>
            <person name="Ishibashi T."/>
            <person name="Yamashita H."/>
            <person name="Murakawa K."/>
            <person name="Fujimori K."/>
            <person name="Tanai H."/>
            <person name="Kimata M."/>
            <person name="Watanabe M."/>
            <person name="Hiraoka S."/>
            <person name="Chiba Y."/>
            <person name="Ishida S."/>
            <person name="Ono Y."/>
            <person name="Takiguchi S."/>
            <person name="Watanabe S."/>
            <person name="Yosida M."/>
            <person name="Hotuta T."/>
            <person name="Kusano J."/>
            <person name="Kanehori K."/>
            <person name="Takahashi-Fujii A."/>
            <person name="Hara H."/>
            <person name="Tanase T.-O."/>
            <person name="Nomura Y."/>
            <person name="Togiya S."/>
            <person name="Komai F."/>
            <person name="Hara R."/>
            <person name="Takeuchi K."/>
            <person name="Arita M."/>
            <person name="Imose N."/>
            <person name="Musashino K."/>
            <person name="Yuuki H."/>
            <person name="Oshima A."/>
            <person name="Sasaki N."/>
            <person name="Aotsuka S."/>
            <person name="Yoshikawa Y."/>
            <person name="Matsunawa H."/>
            <person name="Ichihara T."/>
            <person name="Shiohata N."/>
            <person name="Sano S."/>
            <person name="Moriya S."/>
            <person name="Momiyama H."/>
            <person name="Satoh N."/>
            <person name="Takami S."/>
            <person name="Terashima Y."/>
            <person name="Suzuki O."/>
            <person name="Nakagawa S."/>
            <person name="Senoh A."/>
            <person name="Mizoguchi H."/>
            <person name="Goto Y."/>
            <person name="Shimizu F."/>
            <person name="Wakebe H."/>
            <person name="Hishigaki H."/>
            <person name="Watanabe T."/>
            <person name="Sugiyama A."/>
            <person name="Takemoto M."/>
            <person name="Kawakami B."/>
            <person name="Yamazaki M."/>
            <person name="Watanabe K."/>
            <person name="Kumagai A."/>
            <person name="Itakura S."/>
            <person name="Fukuzumi Y."/>
            <person name="Fujimori Y."/>
            <person name="Komiyama M."/>
            <person name="Tashiro H."/>
            <person name="Tanigami A."/>
            <person name="Fujiwara T."/>
            <person name="Ono T."/>
            <person name="Yamada K."/>
            <person name="Fujii Y."/>
            <person name="Ozaki K."/>
            <person name="Hirao M."/>
            <person name="Ohmori Y."/>
            <person name="Kawabata A."/>
            <person name="Hikiji T."/>
            <person name="Kobatake N."/>
            <person name="Inagaki H."/>
            <person name="Ikema Y."/>
            <person name="Okamoto S."/>
            <person name="Okitani R."/>
            <person name="Kawakami T."/>
            <person name="Noguchi S."/>
            <person name="Itoh T."/>
            <person name="Shigeta K."/>
            <person name="Senba T."/>
            <person name="Matsumura K."/>
            <person name="Nakajima Y."/>
            <person name="Mizuno T."/>
            <person name="Morinaga M."/>
            <person name="Sasaki M."/>
            <person name="Togashi T."/>
            <person name="Oyama M."/>
            <person name="Hata H."/>
            <person name="Watanabe M."/>
            <person name="Komatsu T."/>
            <person name="Mizushima-Sugano J."/>
            <person name="Satoh T."/>
            <person name="Shirai Y."/>
            <person name="Takahashi Y."/>
            <person name="Nakagawa K."/>
            <person name="Okumura K."/>
            <person name="Nagase T."/>
            <person name="Nomura N."/>
            <person name="Kikuchi H."/>
            <person name="Masuho Y."/>
            <person name="Yamashita R."/>
            <person name="Nakai K."/>
            <person name="Yada T."/>
            <person name="Nakamura Y."/>
            <person name="Ohara O."/>
            <person name="Isogai T."/>
            <person name="Sugano S."/>
        </authorList>
    </citation>
    <scope>NUCLEOTIDE SEQUENCE [LARGE SCALE MRNA] (ISOFORM 1)</scope>
    <scope>NUCLEOTIDE SEQUENCE [LARGE SCALE MRNA] OF 295-832 (ISOFORM 2)</scope>
    <source>
        <tissue>Testis</tissue>
    </source>
</reference>
<reference key="2">
    <citation type="journal article" date="2005" name="Nature">
        <title>The DNA sequence of the human X chromosome.</title>
        <authorList>
            <person name="Ross M.T."/>
            <person name="Grafham D.V."/>
            <person name="Coffey A.J."/>
            <person name="Scherer S."/>
            <person name="McLay K."/>
            <person name="Muzny D."/>
            <person name="Platzer M."/>
            <person name="Howell G.R."/>
            <person name="Burrows C."/>
            <person name="Bird C.P."/>
            <person name="Frankish A."/>
            <person name="Lovell F.L."/>
            <person name="Howe K.L."/>
            <person name="Ashurst J.L."/>
            <person name="Fulton R.S."/>
            <person name="Sudbrak R."/>
            <person name="Wen G."/>
            <person name="Jones M.C."/>
            <person name="Hurles M.E."/>
            <person name="Andrews T.D."/>
            <person name="Scott C.E."/>
            <person name="Searle S."/>
            <person name="Ramser J."/>
            <person name="Whittaker A."/>
            <person name="Deadman R."/>
            <person name="Carter N.P."/>
            <person name="Hunt S.E."/>
            <person name="Chen R."/>
            <person name="Cree A."/>
            <person name="Gunaratne P."/>
            <person name="Havlak P."/>
            <person name="Hodgson A."/>
            <person name="Metzker M.L."/>
            <person name="Richards S."/>
            <person name="Scott G."/>
            <person name="Steffen D."/>
            <person name="Sodergren E."/>
            <person name="Wheeler D.A."/>
            <person name="Worley K.C."/>
            <person name="Ainscough R."/>
            <person name="Ambrose K.D."/>
            <person name="Ansari-Lari M.A."/>
            <person name="Aradhya S."/>
            <person name="Ashwell R.I."/>
            <person name="Babbage A.K."/>
            <person name="Bagguley C.L."/>
            <person name="Ballabio A."/>
            <person name="Banerjee R."/>
            <person name="Barker G.E."/>
            <person name="Barlow K.F."/>
            <person name="Barrett I.P."/>
            <person name="Bates K.N."/>
            <person name="Beare D.M."/>
            <person name="Beasley H."/>
            <person name="Beasley O."/>
            <person name="Beck A."/>
            <person name="Bethel G."/>
            <person name="Blechschmidt K."/>
            <person name="Brady N."/>
            <person name="Bray-Allen S."/>
            <person name="Bridgeman A.M."/>
            <person name="Brown A.J."/>
            <person name="Brown M.J."/>
            <person name="Bonnin D."/>
            <person name="Bruford E.A."/>
            <person name="Buhay C."/>
            <person name="Burch P."/>
            <person name="Burford D."/>
            <person name="Burgess J."/>
            <person name="Burrill W."/>
            <person name="Burton J."/>
            <person name="Bye J.M."/>
            <person name="Carder C."/>
            <person name="Carrel L."/>
            <person name="Chako J."/>
            <person name="Chapman J.C."/>
            <person name="Chavez D."/>
            <person name="Chen E."/>
            <person name="Chen G."/>
            <person name="Chen Y."/>
            <person name="Chen Z."/>
            <person name="Chinault C."/>
            <person name="Ciccodicola A."/>
            <person name="Clark S.Y."/>
            <person name="Clarke G."/>
            <person name="Clee C.M."/>
            <person name="Clegg S."/>
            <person name="Clerc-Blankenburg K."/>
            <person name="Clifford K."/>
            <person name="Cobley V."/>
            <person name="Cole C.G."/>
            <person name="Conquer J.S."/>
            <person name="Corby N."/>
            <person name="Connor R.E."/>
            <person name="David R."/>
            <person name="Davies J."/>
            <person name="Davis C."/>
            <person name="Davis J."/>
            <person name="Delgado O."/>
            <person name="Deshazo D."/>
            <person name="Dhami P."/>
            <person name="Ding Y."/>
            <person name="Dinh H."/>
            <person name="Dodsworth S."/>
            <person name="Draper H."/>
            <person name="Dugan-Rocha S."/>
            <person name="Dunham A."/>
            <person name="Dunn M."/>
            <person name="Durbin K.J."/>
            <person name="Dutta I."/>
            <person name="Eades T."/>
            <person name="Ellwood M."/>
            <person name="Emery-Cohen A."/>
            <person name="Errington H."/>
            <person name="Evans K.L."/>
            <person name="Faulkner L."/>
            <person name="Francis F."/>
            <person name="Frankland J."/>
            <person name="Fraser A.E."/>
            <person name="Galgoczy P."/>
            <person name="Gilbert J."/>
            <person name="Gill R."/>
            <person name="Gloeckner G."/>
            <person name="Gregory S.G."/>
            <person name="Gribble S."/>
            <person name="Griffiths C."/>
            <person name="Grocock R."/>
            <person name="Gu Y."/>
            <person name="Gwilliam R."/>
            <person name="Hamilton C."/>
            <person name="Hart E.A."/>
            <person name="Hawes A."/>
            <person name="Heath P.D."/>
            <person name="Heitmann K."/>
            <person name="Hennig S."/>
            <person name="Hernandez J."/>
            <person name="Hinzmann B."/>
            <person name="Ho S."/>
            <person name="Hoffs M."/>
            <person name="Howden P.J."/>
            <person name="Huckle E.J."/>
            <person name="Hume J."/>
            <person name="Hunt P.J."/>
            <person name="Hunt A.R."/>
            <person name="Isherwood J."/>
            <person name="Jacob L."/>
            <person name="Johnson D."/>
            <person name="Jones S."/>
            <person name="de Jong P.J."/>
            <person name="Joseph S.S."/>
            <person name="Keenan S."/>
            <person name="Kelly S."/>
            <person name="Kershaw J.K."/>
            <person name="Khan Z."/>
            <person name="Kioschis P."/>
            <person name="Klages S."/>
            <person name="Knights A.J."/>
            <person name="Kosiura A."/>
            <person name="Kovar-Smith C."/>
            <person name="Laird G.K."/>
            <person name="Langford C."/>
            <person name="Lawlor S."/>
            <person name="Leversha M."/>
            <person name="Lewis L."/>
            <person name="Liu W."/>
            <person name="Lloyd C."/>
            <person name="Lloyd D.M."/>
            <person name="Loulseged H."/>
            <person name="Loveland J.E."/>
            <person name="Lovell J.D."/>
            <person name="Lozado R."/>
            <person name="Lu J."/>
            <person name="Lyne R."/>
            <person name="Ma J."/>
            <person name="Maheshwari M."/>
            <person name="Matthews L.H."/>
            <person name="McDowall J."/>
            <person name="McLaren S."/>
            <person name="McMurray A."/>
            <person name="Meidl P."/>
            <person name="Meitinger T."/>
            <person name="Milne S."/>
            <person name="Miner G."/>
            <person name="Mistry S.L."/>
            <person name="Morgan M."/>
            <person name="Morris S."/>
            <person name="Mueller I."/>
            <person name="Mullikin J.C."/>
            <person name="Nguyen N."/>
            <person name="Nordsiek G."/>
            <person name="Nyakatura G."/>
            <person name="O'dell C.N."/>
            <person name="Okwuonu G."/>
            <person name="Palmer S."/>
            <person name="Pandian R."/>
            <person name="Parker D."/>
            <person name="Parrish J."/>
            <person name="Pasternak S."/>
            <person name="Patel D."/>
            <person name="Pearce A.V."/>
            <person name="Pearson D.M."/>
            <person name="Pelan S.E."/>
            <person name="Perez L."/>
            <person name="Porter K.M."/>
            <person name="Ramsey Y."/>
            <person name="Reichwald K."/>
            <person name="Rhodes S."/>
            <person name="Ridler K.A."/>
            <person name="Schlessinger D."/>
            <person name="Schueler M.G."/>
            <person name="Sehra H.K."/>
            <person name="Shaw-Smith C."/>
            <person name="Shen H."/>
            <person name="Sheridan E.M."/>
            <person name="Shownkeen R."/>
            <person name="Skuce C.D."/>
            <person name="Smith M.L."/>
            <person name="Sotheran E.C."/>
            <person name="Steingruber H.E."/>
            <person name="Steward C.A."/>
            <person name="Storey R."/>
            <person name="Swann R.M."/>
            <person name="Swarbreck D."/>
            <person name="Tabor P.E."/>
            <person name="Taudien S."/>
            <person name="Taylor T."/>
            <person name="Teague B."/>
            <person name="Thomas K."/>
            <person name="Thorpe A."/>
            <person name="Timms K."/>
            <person name="Tracey A."/>
            <person name="Trevanion S."/>
            <person name="Tromans A.C."/>
            <person name="d'Urso M."/>
            <person name="Verduzco D."/>
            <person name="Villasana D."/>
            <person name="Waldron L."/>
            <person name="Wall M."/>
            <person name="Wang Q."/>
            <person name="Warren J."/>
            <person name="Warry G.L."/>
            <person name="Wei X."/>
            <person name="West A."/>
            <person name="Whitehead S.L."/>
            <person name="Whiteley M.N."/>
            <person name="Wilkinson J.E."/>
            <person name="Willey D.L."/>
            <person name="Williams G."/>
            <person name="Williams L."/>
            <person name="Williamson A."/>
            <person name="Williamson H."/>
            <person name="Wilming L."/>
            <person name="Woodmansey R.L."/>
            <person name="Wray P.W."/>
            <person name="Yen J."/>
            <person name="Zhang J."/>
            <person name="Zhou J."/>
            <person name="Zoghbi H."/>
            <person name="Zorilla S."/>
            <person name="Buck D."/>
            <person name="Reinhardt R."/>
            <person name="Poustka A."/>
            <person name="Rosenthal A."/>
            <person name="Lehrach H."/>
            <person name="Meindl A."/>
            <person name="Minx P.J."/>
            <person name="Hillier L.W."/>
            <person name="Willard H.F."/>
            <person name="Wilson R.K."/>
            <person name="Waterston R.H."/>
            <person name="Rice C.M."/>
            <person name="Vaudin M."/>
            <person name="Coulson A."/>
            <person name="Nelson D.L."/>
            <person name="Weinstock G."/>
            <person name="Sulston J.E."/>
            <person name="Durbin R.M."/>
            <person name="Hubbard T."/>
            <person name="Gibbs R.A."/>
            <person name="Beck S."/>
            <person name="Rogers J."/>
            <person name="Bentley D.R."/>
        </authorList>
    </citation>
    <scope>NUCLEOTIDE SEQUENCE [LARGE SCALE GENOMIC DNA]</scope>
</reference>
<evidence type="ECO:0000256" key="1">
    <source>
        <dbReference type="SAM" id="MobiDB-lite"/>
    </source>
</evidence>
<evidence type="ECO:0000303" key="2">
    <source>
    </source>
</evidence>
<evidence type="ECO:0000305" key="3"/>
<evidence type="ECO:0000312" key="4">
    <source>
        <dbReference type="HGNC" id="HGNC:33146"/>
    </source>
</evidence>
<proteinExistence type="evidence at protein level"/>
<keyword id="KW-0025">Alternative splicing</keyword>
<keyword id="KW-1267">Proteomics identification</keyword>
<keyword id="KW-1185">Reference proteome</keyword>
<name>P4R3C_HUMAN</name>
<feature type="chain" id="PRO_0000344447" description="Protein PPP4R3C">
    <location>
        <begin position="1"/>
        <end position="832"/>
    </location>
</feature>
<feature type="region of interest" description="Disordered" evidence="1">
    <location>
        <begin position="708"/>
        <end position="832"/>
    </location>
</feature>
<feature type="compositionally biased region" description="Basic and acidic residues" evidence="1">
    <location>
        <begin position="725"/>
        <end position="735"/>
    </location>
</feature>
<feature type="compositionally biased region" description="Basic and acidic residues" evidence="1">
    <location>
        <begin position="749"/>
        <end position="765"/>
    </location>
</feature>
<feature type="compositionally biased region" description="Low complexity" evidence="1">
    <location>
        <begin position="769"/>
        <end position="779"/>
    </location>
</feature>
<feature type="compositionally biased region" description="Acidic residues" evidence="1">
    <location>
        <begin position="801"/>
        <end position="820"/>
    </location>
</feature>
<feature type="splice variant" id="VSP_034762" description="In isoform 2." evidence="2">
    <location>
        <begin position="734"/>
        <end position="809"/>
    </location>
</feature>
<feature type="sequence conflict" description="In Ref. 1; BAD18620." evidence="3" ref="1">
    <original>SD</original>
    <variation>IY</variation>
    <location>
        <begin position="412"/>
        <end position="413"/>
    </location>
</feature>
<feature type="sequence conflict" description="In Ref. 1; BAD18620/BAB71482." evidence="3" ref="1">
    <original>V</original>
    <variation>A</variation>
    <location>
        <position position="692"/>
    </location>
</feature>
<sequence>MAGLRYSVKVYVLNEDEEWNNLGTGQVSSTYDEQFQGMSLLVRSDSDGSVILRSQIPPDRPYGKYQETLIVWYEAENQGLVLKFQDPAGCQDIWKEICQAQGKDPSIQTTVNISDEPEEDFNEMSVISNMVVLPDCELNTLDQIADIVTSVFSSPVTDRERLAEILKNEAYIPKLLQLFHTCENLENTEGLHHLYEIIKGILFLNEACLFEIMFSDECIMDVVGCLEYDPALDQPKRHRDFLTNDAKFKEVIPITNSELRQKIHQTYRLQYIYDILLPVPSIFEDNFLSTLTTFIFSNKAEIVSMLQKDHKFLYEVFAQLKDETTHDDRRCELLFFFKELCSFSQALQPQSKDALFETLIQLGVLPALKIVMIRDDLQVRSAAAVICAYLVEYSPSRIREFIISEAHVCKDSDLFINVIIKQMICDTDPELGGAVHLMVVLHTLLDPRNMLTTPEKSERSEFLHFFYKHCMHKFTAPLLAATSEHNCEEDDIAGYDKSKNCPNDNQTAQLLALILELLTFCIQHHTFYIRSYILNKDLLRKALILMNSKHTHLILCVLRFMRRMICLNDEAYNNYIIKGNLFEPVVNALLDNGTRYNMLNSAILELFEYIRVENIKPLVSHIVEKFYNTLESIEYVQTFKGLKIKYEKERDRQSQIQKNLHSVLQNIVVFRGTIEEIGLEEEICFMEDAGEVVMPPLEDDDEFMETKRTQEGEAVMPPLEDDDKFTETKRTHQEGEAVMPPLEDDDEFMETKRNQEHEGKVDSPKRTSSGDFKFSSSYSACAAIGTGSPSGSSVVRLVDHPDDEEEKEEDEEEKEEDKEDETSPKKKPHLSS</sequence>
<organism>
    <name type="scientific">Homo sapiens</name>
    <name type="common">Human</name>
    <dbReference type="NCBI Taxonomy" id="9606"/>
    <lineage>
        <taxon>Eukaryota</taxon>
        <taxon>Metazoa</taxon>
        <taxon>Chordata</taxon>
        <taxon>Craniata</taxon>
        <taxon>Vertebrata</taxon>
        <taxon>Euteleostomi</taxon>
        <taxon>Mammalia</taxon>
        <taxon>Eutheria</taxon>
        <taxon>Euarchontoglires</taxon>
        <taxon>Primates</taxon>
        <taxon>Haplorrhini</taxon>
        <taxon>Catarrhini</taxon>
        <taxon>Hominidae</taxon>
        <taxon>Homo</taxon>
    </lineage>
</organism>
<dbReference type="EMBL" id="AK057429">
    <property type="protein sequence ID" value="BAB71482.1"/>
    <property type="status" value="ALT_INIT"/>
    <property type="molecule type" value="mRNA"/>
</dbReference>
<dbReference type="EMBL" id="AK131475">
    <property type="protein sequence ID" value="BAD18620.1"/>
    <property type="molecule type" value="mRNA"/>
</dbReference>
<dbReference type="EMBL" id="AC006210">
    <property type="status" value="NOT_ANNOTATED_CDS"/>
    <property type="molecule type" value="Genomic_DNA"/>
</dbReference>
<dbReference type="CCDS" id="CCDS87732.1">
    <molecule id="Q6ZMV5-1"/>
</dbReference>
<dbReference type="FunCoup" id="Q6ZMV5">
    <property type="interactions" value="8"/>
</dbReference>
<dbReference type="STRING" id="9606.ENSP00000489770"/>
<dbReference type="BioMuta" id="PPP4R3C"/>
<dbReference type="DMDM" id="206558317"/>
<dbReference type="jPOST" id="Q6ZMV5"/>
<dbReference type="MassIVE" id="Q6ZMV5"/>
<dbReference type="PeptideAtlas" id="Q6ZMV5"/>
<dbReference type="ProteomicsDB" id="67920">
    <molecule id="Q6ZMV5-1"/>
</dbReference>
<dbReference type="ProteomicsDB" id="67921">
    <molecule id="Q6ZMV5-2"/>
</dbReference>
<dbReference type="Ensembl" id="ENST00000412172.4">
    <molecule id="Q6ZMV5-1"/>
    <property type="protein sequence ID" value="ENSP00000489770.1"/>
    <property type="gene ID" value="ENSG00000224960.5"/>
</dbReference>
<dbReference type="MANE-Select" id="ENST00000412172.4">
    <property type="protein sequence ID" value="ENSP00000489770.1"/>
    <property type="RefSeq nucleotide sequence ID" value="NM_207319.4"/>
    <property type="RefSeq protein sequence ID" value="NP_997202.3"/>
</dbReference>
<dbReference type="AGR" id="HGNC:33146"/>
<dbReference type="GeneCards" id="PPP4R3C"/>
<dbReference type="HGNC" id="HGNC:33146">
    <property type="gene designation" value="PPP4R3C"/>
</dbReference>
<dbReference type="HPA" id="ENSG00000224960">
    <property type="expression patterns" value="Tissue enriched (testis)"/>
</dbReference>
<dbReference type="neXtProt" id="NX_Q6ZMV5"/>
<dbReference type="OpenTargets" id="ENSG00000224960"/>
<dbReference type="VEuPathDB" id="HostDB:ENSG00000224960"/>
<dbReference type="GeneTree" id="ENSGT00390000018199"/>
<dbReference type="InParanoid" id="Q6ZMV5"/>
<dbReference type="OMA" id="HFFYKHC"/>
<dbReference type="OrthoDB" id="27483at2759"/>
<dbReference type="PAN-GO" id="Q6ZMV5">
    <property type="GO annotations" value="5 GO annotations based on evolutionary models"/>
</dbReference>
<dbReference type="PhylomeDB" id="Q6ZMV5"/>
<dbReference type="PathwayCommons" id="Q6ZMV5"/>
<dbReference type="Pharos" id="Q6ZMV5">
    <property type="development level" value="Tdark"/>
</dbReference>
<dbReference type="PRO" id="PR:Q6ZMV5"/>
<dbReference type="Proteomes" id="UP000005640">
    <property type="component" value="Chromosome X"/>
</dbReference>
<dbReference type="RNAct" id="Q6ZMV5">
    <property type="molecule type" value="protein"/>
</dbReference>
<dbReference type="Bgee" id="ENSG00000224960">
    <property type="expression patterns" value="Expressed in male germ line stem cell (sensu Vertebrata) in testis and 4 other cell types or tissues"/>
</dbReference>
<dbReference type="GO" id="GO:0005654">
    <property type="term" value="C:nucleoplasm"/>
    <property type="evidence" value="ECO:0000318"/>
    <property type="project" value="GO_Central"/>
</dbReference>
<dbReference type="GO" id="GO:0030289">
    <property type="term" value="C:protein phosphatase 4 complex"/>
    <property type="evidence" value="ECO:0000318"/>
    <property type="project" value="GO_Central"/>
</dbReference>
<dbReference type="GO" id="GO:0072542">
    <property type="term" value="F:protein phosphatase activator activity"/>
    <property type="evidence" value="ECO:0000318"/>
    <property type="project" value="GO_Central"/>
</dbReference>
<dbReference type="GO" id="GO:0006974">
    <property type="term" value="P:DNA damage response"/>
    <property type="evidence" value="ECO:0000318"/>
    <property type="project" value="GO_Central"/>
</dbReference>
<dbReference type="GO" id="GO:2000779">
    <property type="term" value="P:regulation of double-strand break repair"/>
    <property type="evidence" value="ECO:0000318"/>
    <property type="project" value="GO_Central"/>
</dbReference>
<dbReference type="Gene3D" id="2.30.29.30">
    <property type="entry name" value="Pleckstrin-homology domain (PH domain)/Phosphotyrosine-binding domain (PTB)"/>
    <property type="match status" value="1"/>
</dbReference>
<dbReference type="InterPro" id="IPR016024">
    <property type="entry name" value="ARM-type_fold"/>
</dbReference>
<dbReference type="InterPro" id="IPR055236">
    <property type="entry name" value="EVH1_PP4R3"/>
</dbReference>
<dbReference type="InterPro" id="IPR006887">
    <property type="entry name" value="P4R3-like_central_dom"/>
</dbReference>
<dbReference type="InterPro" id="IPR011993">
    <property type="entry name" value="PH-like_dom_sf"/>
</dbReference>
<dbReference type="InterPro" id="IPR051137">
    <property type="entry name" value="PP4R3-like"/>
</dbReference>
<dbReference type="PANTHER" id="PTHR23318">
    <property type="entry name" value="ATP SYNTHASE GAMMA-RELATED"/>
    <property type="match status" value="1"/>
</dbReference>
<dbReference type="PANTHER" id="PTHR23318:SF25">
    <property type="entry name" value="PROTEIN PPP4R3C"/>
    <property type="match status" value="1"/>
</dbReference>
<dbReference type="Pfam" id="PF22972">
    <property type="entry name" value="EVH1_PP4R3"/>
    <property type="match status" value="1"/>
</dbReference>
<dbReference type="Pfam" id="PF04802">
    <property type="entry name" value="PP4R3"/>
    <property type="match status" value="1"/>
</dbReference>
<dbReference type="SUPFAM" id="SSF48371">
    <property type="entry name" value="ARM repeat"/>
    <property type="match status" value="1"/>
</dbReference>
<dbReference type="SUPFAM" id="SSF50729">
    <property type="entry name" value="PH domain-like"/>
    <property type="match status" value="1"/>
</dbReference>
<comment type="alternative products">
    <event type="alternative splicing"/>
    <isoform>
        <id>Q6ZMV5-1</id>
        <name>1</name>
        <sequence type="displayed"/>
    </isoform>
    <isoform>
        <id>Q6ZMV5-2</id>
        <name>2</name>
        <sequence type="described" ref="VSP_034762"/>
    </isoform>
</comment>
<comment type="similarity">
    <text evidence="3">Belongs to the SMEK family.</text>
</comment>
<comment type="sequence caution" evidence="3">
    <conflict type="erroneous initiation">
        <sequence resource="EMBL-CDS" id="BAB71482"/>
    </conflict>
</comment>
<accession>Q6ZMV5</accession>
<accession>A0A1B0GTN1</accession>
<accession>Q96M31</accession>
<gene>
    <name evidence="4" type="primary">PPP4R3C</name>
    <name evidence="4" type="synonym">PPP4R3CP</name>
    <name evidence="4" type="synonym">SMEK3P</name>
</gene>
<protein>
    <recommendedName>
        <fullName evidence="3">Protein PPP4R3C</fullName>
    </recommendedName>
    <alternativeName>
        <fullName evidence="4">SMEK homolog 3</fullName>
    </alternativeName>
    <alternativeName>
        <fullName evidence="4">Serine/threonine-protein phosphatase 4 regulatory subunit 3C</fullName>
    </alternativeName>
</protein>